<organism>
    <name type="scientific">Caenorhabditis elegans</name>
    <dbReference type="NCBI Taxonomy" id="6239"/>
    <lineage>
        <taxon>Eukaryota</taxon>
        <taxon>Metazoa</taxon>
        <taxon>Ecdysozoa</taxon>
        <taxon>Nematoda</taxon>
        <taxon>Chromadorea</taxon>
        <taxon>Rhabditida</taxon>
        <taxon>Rhabditina</taxon>
        <taxon>Rhabditomorpha</taxon>
        <taxon>Rhabditoidea</taxon>
        <taxon>Rhabditidae</taxon>
        <taxon>Peloderinae</taxon>
        <taxon>Caenorhabditis</taxon>
    </lineage>
</organism>
<proteinExistence type="inferred from homology"/>
<dbReference type="EMBL" id="FO080582">
    <property type="protein sequence ID" value="CCD64853.1"/>
    <property type="molecule type" value="Genomic_DNA"/>
</dbReference>
<dbReference type="PIR" id="T16942">
    <property type="entry name" value="T16942"/>
</dbReference>
<dbReference type="RefSeq" id="NP_495080.1">
    <property type="nucleotide sequence ID" value="NM_062679.5"/>
</dbReference>
<dbReference type="SMR" id="Q10014"/>
<dbReference type="BioGRID" id="39285">
    <property type="interactions" value="3"/>
</dbReference>
<dbReference type="FunCoup" id="Q10014">
    <property type="interactions" value="365"/>
</dbReference>
<dbReference type="IntAct" id="Q10014">
    <property type="interactions" value="1"/>
</dbReference>
<dbReference type="STRING" id="6239.T25E4.1.1"/>
<dbReference type="PaxDb" id="6239-T25E4.1"/>
<dbReference type="PeptideAtlas" id="Q10014"/>
<dbReference type="EnsemblMetazoa" id="T25E4.1.1">
    <property type="protein sequence ID" value="T25E4.1.1"/>
    <property type="gene ID" value="WBGene00020803"/>
</dbReference>
<dbReference type="GeneID" id="173943"/>
<dbReference type="KEGG" id="cel:CELE_T25E4.1"/>
<dbReference type="UCSC" id="T25E4.1">
    <property type="organism name" value="c. elegans"/>
</dbReference>
<dbReference type="AGR" id="WB:WBGene00020803"/>
<dbReference type="CTD" id="173943"/>
<dbReference type="WormBase" id="T25E4.1">
    <property type="protein sequence ID" value="CE28493"/>
    <property type="gene ID" value="WBGene00020803"/>
</dbReference>
<dbReference type="eggNOG" id="ENOG502SQ9H">
    <property type="taxonomic scope" value="Eukaryota"/>
</dbReference>
<dbReference type="GeneTree" id="ENSGT00970000196440"/>
<dbReference type="HOGENOM" id="CLU_099180_0_0_1"/>
<dbReference type="InParanoid" id="Q10014"/>
<dbReference type="OMA" id="NPVFFAP"/>
<dbReference type="OrthoDB" id="5862654at2759"/>
<dbReference type="PRO" id="PR:Q10014"/>
<dbReference type="Proteomes" id="UP000001940">
    <property type="component" value="Chromosome II"/>
</dbReference>
<dbReference type="Bgee" id="WBGene00020803">
    <property type="expression patterns" value="Expressed in pharyngeal muscle cell (C elegans) and 3 other cell types or tissues"/>
</dbReference>
<dbReference type="InterPro" id="IPR035231">
    <property type="entry name" value="DUF5346"/>
</dbReference>
<dbReference type="Pfam" id="PF17281">
    <property type="entry name" value="DUF5346"/>
    <property type="match status" value="1"/>
</dbReference>
<sequence>MFGKILTTSLLIAMTFAAPSTEEGKSSKRRQYIAPLAGAAQVPRNPLFFAAPALPVAAAPALVRPAFAPVPVAAAPAFAPVPVAAPMVRPMLQQPAIVAPVAPVVAPVGQCPGGPSLPIECDPKRPWPQCPPQSYCYATNSVDIGPYFCCPIWSTYGAAWRPATPFYNYVPPVPANWPDVARMTANWPAAAVAMPLKARKQQKNEGDDEETEDEQKIGSAIDGWVERQAKL</sequence>
<evidence type="ECO:0000255" key="1"/>
<evidence type="ECO:0000256" key="2">
    <source>
        <dbReference type="SAM" id="MobiDB-lite"/>
    </source>
</evidence>
<name>YR01_CAEEL</name>
<feature type="signal peptide" evidence="1">
    <location>
        <begin position="1"/>
        <end position="17"/>
    </location>
</feature>
<feature type="chain" id="PRO_0000014303" description="Uncharacterized protein T25E4.1">
    <location>
        <begin position="18"/>
        <end position="231"/>
    </location>
</feature>
<feature type="region of interest" description="Disordered" evidence="2">
    <location>
        <begin position="197"/>
        <end position="231"/>
    </location>
</feature>
<reference key="1">
    <citation type="journal article" date="1998" name="Science">
        <title>Genome sequence of the nematode C. elegans: a platform for investigating biology.</title>
        <authorList>
            <consortium name="The C. elegans sequencing consortium"/>
        </authorList>
    </citation>
    <scope>NUCLEOTIDE SEQUENCE [LARGE SCALE GENOMIC DNA]</scope>
    <source>
        <strain>Bristol N2</strain>
    </source>
</reference>
<keyword id="KW-1185">Reference proteome</keyword>
<keyword id="KW-0732">Signal</keyword>
<accession>Q10014</accession>
<gene>
    <name type="ORF">T25E4.1</name>
</gene>
<protein>
    <recommendedName>
        <fullName>Uncharacterized protein T25E4.1</fullName>
    </recommendedName>
</protein>